<protein>
    <recommendedName>
        <fullName evidence="1">Arginine--tRNA ligase</fullName>
        <ecNumber evidence="1">6.1.1.19</ecNumber>
    </recommendedName>
    <alternativeName>
        <fullName evidence="1">Arginyl-tRNA synthetase</fullName>
        <shortName evidence="1">ArgRS</shortName>
    </alternativeName>
</protein>
<evidence type="ECO:0000255" key="1">
    <source>
        <dbReference type="HAMAP-Rule" id="MF_00123"/>
    </source>
</evidence>
<accession>A9BDF0</accession>
<reference key="1">
    <citation type="journal article" date="2007" name="PLoS Genet.">
        <title>Patterns and implications of gene gain and loss in the evolution of Prochlorococcus.</title>
        <authorList>
            <person name="Kettler G.C."/>
            <person name="Martiny A.C."/>
            <person name="Huang K."/>
            <person name="Zucker J."/>
            <person name="Coleman M.L."/>
            <person name="Rodrigue S."/>
            <person name="Chen F."/>
            <person name="Lapidus A."/>
            <person name="Ferriera S."/>
            <person name="Johnson J."/>
            <person name="Steglich C."/>
            <person name="Church G.M."/>
            <person name="Richardson P."/>
            <person name="Chisholm S.W."/>
        </authorList>
    </citation>
    <scope>NUCLEOTIDE SEQUENCE [LARGE SCALE GENOMIC DNA]</scope>
    <source>
        <strain>MIT 9211</strain>
    </source>
</reference>
<comment type="catalytic activity">
    <reaction evidence="1">
        <text>tRNA(Arg) + L-arginine + ATP = L-arginyl-tRNA(Arg) + AMP + diphosphate</text>
        <dbReference type="Rhea" id="RHEA:20301"/>
        <dbReference type="Rhea" id="RHEA-COMP:9658"/>
        <dbReference type="Rhea" id="RHEA-COMP:9673"/>
        <dbReference type="ChEBI" id="CHEBI:30616"/>
        <dbReference type="ChEBI" id="CHEBI:32682"/>
        <dbReference type="ChEBI" id="CHEBI:33019"/>
        <dbReference type="ChEBI" id="CHEBI:78442"/>
        <dbReference type="ChEBI" id="CHEBI:78513"/>
        <dbReference type="ChEBI" id="CHEBI:456215"/>
        <dbReference type="EC" id="6.1.1.19"/>
    </reaction>
</comment>
<comment type="subunit">
    <text evidence="1">Monomer.</text>
</comment>
<comment type="subcellular location">
    <subcellularLocation>
        <location evidence="1">Cytoplasm</location>
    </subcellularLocation>
</comment>
<comment type="similarity">
    <text evidence="1">Belongs to the class-I aminoacyl-tRNA synthetase family.</text>
</comment>
<feature type="chain" id="PRO_1000095392" description="Arginine--tRNA ligase">
    <location>
        <begin position="1"/>
        <end position="603"/>
    </location>
</feature>
<feature type="short sequence motif" description="'HIGH' region">
    <location>
        <begin position="143"/>
        <end position="153"/>
    </location>
</feature>
<gene>
    <name evidence="1" type="primary">argS</name>
    <name type="ordered locus">P9211_02051</name>
</gene>
<proteinExistence type="inferred from homology"/>
<dbReference type="EC" id="6.1.1.19" evidence="1"/>
<dbReference type="EMBL" id="CP000878">
    <property type="protein sequence ID" value="ABX08136.1"/>
    <property type="molecule type" value="Genomic_DNA"/>
</dbReference>
<dbReference type="RefSeq" id="WP_012194761.1">
    <property type="nucleotide sequence ID" value="NC_009976.1"/>
</dbReference>
<dbReference type="SMR" id="A9BDF0"/>
<dbReference type="STRING" id="93059.P9211_02051"/>
<dbReference type="KEGG" id="pmj:P9211_02051"/>
<dbReference type="eggNOG" id="COG0018">
    <property type="taxonomic scope" value="Bacteria"/>
</dbReference>
<dbReference type="HOGENOM" id="CLU_006406_5_1_3"/>
<dbReference type="OrthoDB" id="9805987at2"/>
<dbReference type="Proteomes" id="UP000000788">
    <property type="component" value="Chromosome"/>
</dbReference>
<dbReference type="GO" id="GO:0005737">
    <property type="term" value="C:cytoplasm"/>
    <property type="evidence" value="ECO:0007669"/>
    <property type="project" value="UniProtKB-SubCell"/>
</dbReference>
<dbReference type="GO" id="GO:0004814">
    <property type="term" value="F:arginine-tRNA ligase activity"/>
    <property type="evidence" value="ECO:0007669"/>
    <property type="project" value="UniProtKB-UniRule"/>
</dbReference>
<dbReference type="GO" id="GO:0005524">
    <property type="term" value="F:ATP binding"/>
    <property type="evidence" value="ECO:0007669"/>
    <property type="project" value="UniProtKB-UniRule"/>
</dbReference>
<dbReference type="GO" id="GO:0006420">
    <property type="term" value="P:arginyl-tRNA aminoacylation"/>
    <property type="evidence" value="ECO:0007669"/>
    <property type="project" value="UniProtKB-UniRule"/>
</dbReference>
<dbReference type="CDD" id="cd07956">
    <property type="entry name" value="Anticodon_Ia_Arg"/>
    <property type="match status" value="1"/>
</dbReference>
<dbReference type="CDD" id="cd00671">
    <property type="entry name" value="ArgRS_core"/>
    <property type="match status" value="1"/>
</dbReference>
<dbReference type="FunFam" id="3.40.50.620:FF:000030">
    <property type="entry name" value="Arginine--tRNA ligase"/>
    <property type="match status" value="1"/>
</dbReference>
<dbReference type="FunFam" id="1.10.730.10:FF:000006">
    <property type="entry name" value="Arginyl-tRNA synthetase 2, mitochondrial"/>
    <property type="match status" value="1"/>
</dbReference>
<dbReference type="Gene3D" id="3.30.1360.70">
    <property type="entry name" value="Arginyl tRNA synthetase N-terminal domain"/>
    <property type="match status" value="1"/>
</dbReference>
<dbReference type="Gene3D" id="3.40.50.620">
    <property type="entry name" value="HUPs"/>
    <property type="match status" value="1"/>
</dbReference>
<dbReference type="Gene3D" id="1.10.730.10">
    <property type="entry name" value="Isoleucyl-tRNA Synthetase, Domain 1"/>
    <property type="match status" value="1"/>
</dbReference>
<dbReference type="HAMAP" id="MF_00123">
    <property type="entry name" value="Arg_tRNA_synth"/>
    <property type="match status" value="1"/>
</dbReference>
<dbReference type="InterPro" id="IPR001412">
    <property type="entry name" value="aa-tRNA-synth_I_CS"/>
</dbReference>
<dbReference type="InterPro" id="IPR001278">
    <property type="entry name" value="Arg-tRNA-ligase"/>
</dbReference>
<dbReference type="InterPro" id="IPR005148">
    <property type="entry name" value="Arg-tRNA-synth_N"/>
</dbReference>
<dbReference type="InterPro" id="IPR036695">
    <property type="entry name" value="Arg-tRNA-synth_N_sf"/>
</dbReference>
<dbReference type="InterPro" id="IPR035684">
    <property type="entry name" value="ArgRS_core"/>
</dbReference>
<dbReference type="InterPro" id="IPR008909">
    <property type="entry name" value="DALR_anticod-bd"/>
</dbReference>
<dbReference type="InterPro" id="IPR014729">
    <property type="entry name" value="Rossmann-like_a/b/a_fold"/>
</dbReference>
<dbReference type="InterPro" id="IPR009080">
    <property type="entry name" value="tRNAsynth_Ia_anticodon-bd"/>
</dbReference>
<dbReference type="NCBIfam" id="TIGR00456">
    <property type="entry name" value="argS"/>
    <property type="match status" value="1"/>
</dbReference>
<dbReference type="PANTHER" id="PTHR11956:SF5">
    <property type="entry name" value="ARGININE--TRNA LIGASE, CYTOPLASMIC"/>
    <property type="match status" value="1"/>
</dbReference>
<dbReference type="PANTHER" id="PTHR11956">
    <property type="entry name" value="ARGINYL-TRNA SYNTHETASE"/>
    <property type="match status" value="1"/>
</dbReference>
<dbReference type="Pfam" id="PF03485">
    <property type="entry name" value="Arg_tRNA_synt_N"/>
    <property type="match status" value="1"/>
</dbReference>
<dbReference type="Pfam" id="PF05746">
    <property type="entry name" value="DALR_1"/>
    <property type="match status" value="1"/>
</dbReference>
<dbReference type="Pfam" id="PF00750">
    <property type="entry name" value="tRNA-synt_1d"/>
    <property type="match status" value="1"/>
</dbReference>
<dbReference type="PRINTS" id="PR01038">
    <property type="entry name" value="TRNASYNTHARG"/>
</dbReference>
<dbReference type="SMART" id="SM01016">
    <property type="entry name" value="Arg_tRNA_synt_N"/>
    <property type="match status" value="1"/>
</dbReference>
<dbReference type="SMART" id="SM00836">
    <property type="entry name" value="DALR_1"/>
    <property type="match status" value="1"/>
</dbReference>
<dbReference type="SUPFAM" id="SSF47323">
    <property type="entry name" value="Anticodon-binding domain of a subclass of class I aminoacyl-tRNA synthetases"/>
    <property type="match status" value="1"/>
</dbReference>
<dbReference type="SUPFAM" id="SSF55190">
    <property type="entry name" value="Arginyl-tRNA synthetase (ArgRS), N-terminal 'additional' domain"/>
    <property type="match status" value="1"/>
</dbReference>
<dbReference type="SUPFAM" id="SSF52374">
    <property type="entry name" value="Nucleotidylyl transferase"/>
    <property type="match status" value="1"/>
</dbReference>
<dbReference type="PROSITE" id="PS00178">
    <property type="entry name" value="AA_TRNA_LIGASE_I"/>
    <property type="match status" value="1"/>
</dbReference>
<organism>
    <name type="scientific">Prochlorococcus marinus (strain MIT 9211)</name>
    <dbReference type="NCBI Taxonomy" id="93059"/>
    <lineage>
        <taxon>Bacteria</taxon>
        <taxon>Bacillati</taxon>
        <taxon>Cyanobacteriota</taxon>
        <taxon>Cyanophyceae</taxon>
        <taxon>Synechococcales</taxon>
        <taxon>Prochlorococcaceae</taxon>
        <taxon>Prochlorococcus</taxon>
    </lineage>
</organism>
<keyword id="KW-0030">Aminoacyl-tRNA synthetase</keyword>
<keyword id="KW-0067">ATP-binding</keyword>
<keyword id="KW-0963">Cytoplasm</keyword>
<keyword id="KW-0436">Ligase</keyword>
<keyword id="KW-0547">Nucleotide-binding</keyword>
<keyword id="KW-0648">Protein biosynthesis</keyword>
<keyword id="KW-1185">Reference proteome</keyword>
<sequence length="603" mass="67784">MRNIYLALNQHICGALEAAFPQASLVAKQSGQSLNPQLVPATKPEFGDFQVNGALALSKILKKAPRKIAEEIIKQLVKNDDFNKLCLKPEIAGPGFINLTIQNSCLTTEICARLNDDHLGVPIAKPLKTHKSLKPIVVDFSSPNIAKEMHVGHLRSTIIGDSIARVLEFRGHPVLRLNHVGDWGTQFGMLITYLKLVAPEALTTANAINLGDLVKFYRQAKKLFDEDETFQDASREEVVRLQNGDPQSLKAWQLLCDQSRIEFEKIYKRLDIHITERGESFYNQYLQDVIDDLKSTNLLVTDNGAKCIFLDDITGKDGKPLPLIVQKTDGGFNYATTDLAAIRYRLQAYPQGDGACRLIYVTDAGQASHFFAVFQVARRANWIPNDCRIEHVPFGLVQGEDGKKLKTRSGDTVRLKDLLDEAIIRAKNDLEERLNAEGRKEDQEFINKVSRVIGIAAVKYADLSQNRITNYQFSFNRMLALQGNTAPYLLYALVRIAGINRKGGSLNATINKLTFNEPQEWMLARELLKFDEVILQVEEELLPNRLCNYLFELSQVFNRFYDQVPVLKANDSLKASRLALCQLTADTIKLGLKLLGIPTLDRM</sequence>
<name>SYR_PROM4</name>